<feature type="chain" id="PRO_0000169368" description="Uncharacterized protein YggL">
    <location>
        <begin position="1"/>
        <end position="108"/>
    </location>
</feature>
<feature type="sequence conflict" description="In Ref. 3; M59471." evidence="1" ref="3">
    <original>E</original>
    <variation>A</variation>
    <location>
        <position position="73"/>
    </location>
</feature>
<keyword id="KW-1185">Reference proteome</keyword>
<comment type="similarity">
    <text evidence="1">To H.influenzae HI_0341.</text>
</comment>
<comment type="sequence caution" evidence="1">
    <conflict type="erroneous initiation">
        <sequence resource="EMBL-CDS" id="AAA69126"/>
    </conflict>
    <text>Extended N-terminus.</text>
</comment>
<dbReference type="EMBL" id="U28377">
    <property type="protein sequence ID" value="AAA69126.1"/>
    <property type="status" value="ALT_INIT"/>
    <property type="molecule type" value="Genomic_DNA"/>
</dbReference>
<dbReference type="EMBL" id="U00096">
    <property type="protein sequence ID" value="AAC75996.2"/>
    <property type="molecule type" value="Genomic_DNA"/>
</dbReference>
<dbReference type="EMBL" id="AP009048">
    <property type="protein sequence ID" value="BAE77022.1"/>
    <property type="molecule type" value="Genomic_DNA"/>
</dbReference>
<dbReference type="EMBL" id="M59471">
    <property type="status" value="NOT_ANNOTATED_CDS"/>
    <property type="molecule type" value="Genomic_DNA"/>
</dbReference>
<dbReference type="PIR" id="F65081">
    <property type="entry name" value="F65081"/>
</dbReference>
<dbReference type="RefSeq" id="NP_417434.4">
    <property type="nucleotide sequence ID" value="NC_000913.3"/>
</dbReference>
<dbReference type="RefSeq" id="WP_001107564.1">
    <property type="nucleotide sequence ID" value="NZ_STEB01000001.1"/>
</dbReference>
<dbReference type="BioGRID" id="4262357">
    <property type="interactions" value="16"/>
</dbReference>
<dbReference type="BioGRID" id="851769">
    <property type="interactions" value="2"/>
</dbReference>
<dbReference type="DIP" id="DIP-12189N"/>
<dbReference type="FunCoup" id="P38521">
    <property type="interactions" value="44"/>
</dbReference>
<dbReference type="IntAct" id="P38521">
    <property type="interactions" value="13"/>
</dbReference>
<dbReference type="STRING" id="511145.b2959"/>
<dbReference type="jPOST" id="P38521"/>
<dbReference type="PaxDb" id="511145-b2959"/>
<dbReference type="EnsemblBacteria" id="AAC75996">
    <property type="protein sequence ID" value="AAC75996"/>
    <property type="gene ID" value="b2959"/>
</dbReference>
<dbReference type="GeneID" id="947449"/>
<dbReference type="KEGG" id="ecj:JW2926"/>
<dbReference type="KEGG" id="eco:b2959"/>
<dbReference type="KEGG" id="ecoc:C3026_16195"/>
<dbReference type="PATRIC" id="fig|511145.12.peg.3054"/>
<dbReference type="EchoBASE" id="EB2337"/>
<dbReference type="eggNOG" id="COG3171">
    <property type="taxonomic scope" value="Bacteria"/>
</dbReference>
<dbReference type="HOGENOM" id="CLU_153063_1_0_6"/>
<dbReference type="InParanoid" id="P38521"/>
<dbReference type="OMA" id="PLLDVWY"/>
<dbReference type="OrthoDB" id="9114861at2"/>
<dbReference type="PhylomeDB" id="P38521"/>
<dbReference type="BioCyc" id="EcoCyc:EG12443-MONOMER"/>
<dbReference type="PRO" id="PR:P38521"/>
<dbReference type="Proteomes" id="UP000000625">
    <property type="component" value="Chromosome"/>
</dbReference>
<dbReference type="GO" id="GO:0005829">
    <property type="term" value="C:cytosol"/>
    <property type="evidence" value="ECO:0000314"/>
    <property type="project" value="EcoCyc"/>
</dbReference>
<dbReference type="GO" id="GO:0042255">
    <property type="term" value="P:ribosome assembly"/>
    <property type="evidence" value="ECO:0000315"/>
    <property type="project" value="EcoCyc"/>
</dbReference>
<dbReference type="InterPro" id="IPR007416">
    <property type="entry name" value="YggL_50S_bp"/>
</dbReference>
<dbReference type="NCBIfam" id="NF008685">
    <property type="entry name" value="PRK11702.1"/>
    <property type="match status" value="1"/>
</dbReference>
<dbReference type="PANTHER" id="PTHR38778:SF1">
    <property type="entry name" value="CYTOPLASMIC PROTEIN"/>
    <property type="match status" value="1"/>
</dbReference>
<dbReference type="PANTHER" id="PTHR38778">
    <property type="entry name" value="CYTOPLASMIC PROTEIN-RELATED"/>
    <property type="match status" value="1"/>
</dbReference>
<dbReference type="Pfam" id="PF04320">
    <property type="entry name" value="YggL_50S_bp"/>
    <property type="match status" value="1"/>
</dbReference>
<sequence>MAKNRSRRLRKKMHIDEFQELGFSVAWRFPEGTSEEQIDKTVDDFINEVIEPNKLAFDGSGYLAWEGLICMQEIGKCTEEHQAIVRKWLEERKLDEVRTSELFDVWWD</sequence>
<name>YGGL_ECOLI</name>
<gene>
    <name type="primary">yggL</name>
    <name type="ordered locus">b2959</name>
    <name type="ordered locus">JW2926</name>
</gene>
<protein>
    <recommendedName>
        <fullName>Uncharacterized protein YggL</fullName>
    </recommendedName>
</protein>
<accession>P38521</accession>
<accession>P76650</accession>
<accession>Q2M9N4</accession>
<reference key="1">
    <citation type="journal article" date="1997" name="Science">
        <title>The complete genome sequence of Escherichia coli K-12.</title>
        <authorList>
            <person name="Blattner F.R."/>
            <person name="Plunkett G. III"/>
            <person name="Bloch C.A."/>
            <person name="Perna N.T."/>
            <person name="Burland V."/>
            <person name="Riley M."/>
            <person name="Collado-Vides J."/>
            <person name="Glasner J.D."/>
            <person name="Rode C.K."/>
            <person name="Mayhew G.F."/>
            <person name="Gregor J."/>
            <person name="Davis N.W."/>
            <person name="Kirkpatrick H.A."/>
            <person name="Goeden M.A."/>
            <person name="Rose D.J."/>
            <person name="Mau B."/>
            <person name="Shao Y."/>
        </authorList>
    </citation>
    <scope>NUCLEOTIDE SEQUENCE [LARGE SCALE GENOMIC DNA]</scope>
    <source>
        <strain>K12 / MG1655 / ATCC 47076</strain>
    </source>
</reference>
<reference key="2">
    <citation type="journal article" date="2006" name="Mol. Syst. Biol.">
        <title>Highly accurate genome sequences of Escherichia coli K-12 strains MG1655 and W3110.</title>
        <authorList>
            <person name="Hayashi K."/>
            <person name="Morooka N."/>
            <person name="Yamamoto Y."/>
            <person name="Fujita K."/>
            <person name="Isono K."/>
            <person name="Choi S."/>
            <person name="Ohtsubo E."/>
            <person name="Baba T."/>
            <person name="Wanner B.L."/>
            <person name="Mori H."/>
            <person name="Horiuchi T."/>
        </authorList>
    </citation>
    <scope>NUCLEOTIDE SEQUENCE [LARGE SCALE GENOMIC DNA]</scope>
    <source>
        <strain>K12 / W3110 / ATCC 27325 / DSM 5911</strain>
    </source>
</reference>
<reference key="3">
    <citation type="journal article" date="1991" name="J. Bacteriol.">
        <title>Nucleotide sequence of the Escherichia coli micA gene required for A/G-specific mismatch repair: identity of micA and mutY.</title>
        <authorList>
            <person name="Tsai-Wu J.-J."/>
            <person name="Radicella J.P."/>
            <person name="Lu A.-L."/>
        </authorList>
    </citation>
    <scope>NUCLEOTIDE SEQUENCE [GENOMIC DNA] OF 1-73</scope>
    <source>
        <strain>K12</strain>
    </source>
</reference>
<reference key="4">
    <citation type="unpublished observations" date="1994-08">
        <authorList>
            <person name="Rudd K.E."/>
        </authorList>
    </citation>
    <scope>IDENTIFICATION</scope>
</reference>
<proteinExistence type="predicted"/>
<evidence type="ECO:0000305" key="1"/>
<organism>
    <name type="scientific">Escherichia coli (strain K12)</name>
    <dbReference type="NCBI Taxonomy" id="83333"/>
    <lineage>
        <taxon>Bacteria</taxon>
        <taxon>Pseudomonadati</taxon>
        <taxon>Pseudomonadota</taxon>
        <taxon>Gammaproteobacteria</taxon>
        <taxon>Enterobacterales</taxon>
        <taxon>Enterobacteriaceae</taxon>
        <taxon>Escherichia</taxon>
    </lineage>
</organism>